<protein>
    <recommendedName>
        <fullName>DNA recombination protein RmuC</fullName>
    </recommendedName>
</protein>
<reference key="1">
    <citation type="journal article" date="1989" name="Nucleic Acids Res.">
        <title>Nucleotide sequence of the Escherichia coli uridine phosphorylase (udp) gene.</title>
        <authorList>
            <person name="Walton L."/>
            <person name="Richards C.A."/>
            <person name="Elwell L.P."/>
        </authorList>
    </citation>
    <scope>NUCLEOTIDE SEQUENCE [GENOMIC DNA]</scope>
    <source>
        <strain>K12</strain>
    </source>
</reference>
<reference key="2">
    <citation type="journal article" date="2000" name="Genes Cells">
        <title>Genes involved in the determination of the rate of inversions at short inverted repeats.</title>
        <authorList>
            <person name="Slupska M.M."/>
            <person name="Chiang J.-H."/>
            <person name="Luther W.M."/>
            <person name="Stewart J.L."/>
            <person name="Amii L."/>
            <person name="Conrad A."/>
            <person name="Miller J.H."/>
        </authorList>
    </citation>
    <scope>NUCLEOTIDE SEQUENCE [GENOMIC DNA]</scope>
</reference>
<reference key="3">
    <citation type="journal article" date="1992" name="Science">
        <title>Analysis of the Escherichia coli genome: DNA sequence of the region from 84.5 to 86.5 minutes.</title>
        <authorList>
            <person name="Daniels D.L."/>
            <person name="Plunkett G. III"/>
            <person name="Burland V.D."/>
            <person name="Blattner F.R."/>
        </authorList>
    </citation>
    <scope>NUCLEOTIDE SEQUENCE [LARGE SCALE GENOMIC DNA]</scope>
    <source>
        <strain>K12 / MG1655 / ATCC 47076</strain>
    </source>
</reference>
<reference key="4">
    <citation type="journal article" date="1997" name="Science">
        <title>The complete genome sequence of Escherichia coli K-12.</title>
        <authorList>
            <person name="Blattner F.R."/>
            <person name="Plunkett G. III"/>
            <person name="Bloch C.A."/>
            <person name="Perna N.T."/>
            <person name="Burland V."/>
            <person name="Riley M."/>
            <person name="Collado-Vides J."/>
            <person name="Glasner J.D."/>
            <person name="Rode C.K."/>
            <person name="Mayhew G.F."/>
            <person name="Gregor J."/>
            <person name="Davis N.W."/>
            <person name="Kirkpatrick H.A."/>
            <person name="Goeden M.A."/>
            <person name="Rose D.J."/>
            <person name="Mau B."/>
            <person name="Shao Y."/>
        </authorList>
    </citation>
    <scope>NUCLEOTIDE SEQUENCE [LARGE SCALE GENOMIC DNA]</scope>
    <source>
        <strain>K12 / MG1655 / ATCC 47076</strain>
    </source>
</reference>
<reference key="5">
    <citation type="journal article" date="2006" name="Mol. Syst. Biol.">
        <title>Highly accurate genome sequences of Escherichia coli K-12 strains MG1655 and W3110.</title>
        <authorList>
            <person name="Hayashi K."/>
            <person name="Morooka N."/>
            <person name="Yamamoto Y."/>
            <person name="Fujita K."/>
            <person name="Isono K."/>
            <person name="Choi S."/>
            <person name="Ohtsubo E."/>
            <person name="Baba T."/>
            <person name="Wanner B.L."/>
            <person name="Mori H."/>
            <person name="Horiuchi T."/>
        </authorList>
    </citation>
    <scope>NUCLEOTIDE SEQUENCE [LARGE SCALE GENOMIC DNA]</scope>
    <source>
        <strain>K12 / W3110 / ATCC 27325 / DSM 5911</strain>
    </source>
</reference>
<evidence type="ECO:0000255" key="1"/>
<evidence type="ECO:0000256" key="2">
    <source>
        <dbReference type="SAM" id="MobiDB-lite"/>
    </source>
</evidence>
<evidence type="ECO:0000305" key="3"/>
<accession>P0AG71</accession>
<accession>P27850</accession>
<accession>Q2M8D7</accession>
<keyword id="KW-0175">Coiled coil</keyword>
<keyword id="KW-0233">DNA recombination</keyword>
<keyword id="KW-1185">Reference proteome</keyword>
<dbReference type="EMBL" id="X15689">
    <property type="status" value="NOT_ANNOTATED_CDS"/>
    <property type="molecule type" value="Genomic_DNA"/>
</dbReference>
<dbReference type="EMBL" id="AF300647">
    <property type="protein sequence ID" value="AAG17924.1"/>
    <property type="molecule type" value="Genomic_DNA"/>
</dbReference>
<dbReference type="EMBL" id="M87049">
    <property type="protein sequence ID" value="AAA67627.1"/>
    <property type="molecule type" value="Genomic_DNA"/>
</dbReference>
<dbReference type="EMBL" id="U00096">
    <property type="protein sequence ID" value="AAC76835.1"/>
    <property type="molecule type" value="Genomic_DNA"/>
</dbReference>
<dbReference type="EMBL" id="AP009048">
    <property type="protein sequence ID" value="BAE77469.1"/>
    <property type="molecule type" value="Genomic_DNA"/>
</dbReference>
<dbReference type="PIR" id="A65188">
    <property type="entry name" value="A65188"/>
</dbReference>
<dbReference type="RefSeq" id="NP_418276.1">
    <property type="nucleotide sequence ID" value="NC_000913.3"/>
</dbReference>
<dbReference type="RefSeq" id="WP_000347714.1">
    <property type="nucleotide sequence ID" value="NZ_SSZK01000046.1"/>
</dbReference>
<dbReference type="SMR" id="P0AG71"/>
<dbReference type="BioGRID" id="4259611">
    <property type="interactions" value="17"/>
</dbReference>
<dbReference type="FunCoup" id="P0AG71">
    <property type="interactions" value="139"/>
</dbReference>
<dbReference type="IntAct" id="P0AG71">
    <property type="interactions" value="7"/>
</dbReference>
<dbReference type="STRING" id="511145.b3832"/>
<dbReference type="jPOST" id="P0AG71"/>
<dbReference type="PaxDb" id="511145-b3832"/>
<dbReference type="EnsemblBacteria" id="AAC76835">
    <property type="protein sequence ID" value="AAC76835"/>
    <property type="gene ID" value="b3832"/>
</dbReference>
<dbReference type="GeneID" id="75204826"/>
<dbReference type="GeneID" id="948966"/>
<dbReference type="KEGG" id="ecj:JW3809"/>
<dbReference type="KEGG" id="eco:b3832"/>
<dbReference type="KEGG" id="ecoc:C3026_20735"/>
<dbReference type="PATRIC" id="fig|1411691.4.peg.2876"/>
<dbReference type="EchoBASE" id="EB1440"/>
<dbReference type="eggNOG" id="COG1322">
    <property type="taxonomic scope" value="Bacteria"/>
</dbReference>
<dbReference type="HOGENOM" id="CLU_024057_0_1_6"/>
<dbReference type="InParanoid" id="P0AG71"/>
<dbReference type="OMA" id="GDSKMQG"/>
<dbReference type="OrthoDB" id="9765111at2"/>
<dbReference type="PhylomeDB" id="P0AG71"/>
<dbReference type="BioCyc" id="EcoCyc:EG11472-MONOMER"/>
<dbReference type="PRO" id="PR:P0AG71"/>
<dbReference type="Proteomes" id="UP000000625">
    <property type="component" value="Chromosome"/>
</dbReference>
<dbReference type="GO" id="GO:0006310">
    <property type="term" value="P:DNA recombination"/>
    <property type="evidence" value="ECO:0000269"/>
    <property type="project" value="EcoCyc"/>
</dbReference>
<dbReference type="InterPro" id="IPR003798">
    <property type="entry name" value="DNA_recombination_RmuC"/>
</dbReference>
<dbReference type="NCBIfam" id="NF007686">
    <property type="entry name" value="PRK10361.1"/>
    <property type="match status" value="1"/>
</dbReference>
<dbReference type="PANTHER" id="PTHR30563">
    <property type="entry name" value="DNA RECOMBINATION PROTEIN RMUC"/>
    <property type="match status" value="1"/>
</dbReference>
<dbReference type="PANTHER" id="PTHR30563:SF0">
    <property type="entry name" value="DNA RECOMBINATION PROTEIN RMUC"/>
    <property type="match status" value="1"/>
</dbReference>
<dbReference type="Pfam" id="PF02646">
    <property type="entry name" value="RmuC"/>
    <property type="match status" value="1"/>
</dbReference>
<feature type="chain" id="PRO_0000202036" description="DNA recombination protein RmuC">
    <location>
        <begin position="1"/>
        <end position="475"/>
    </location>
</feature>
<feature type="region of interest" description="Disordered" evidence="2">
    <location>
        <begin position="440"/>
        <end position="475"/>
    </location>
</feature>
<feature type="coiled-coil region" evidence="1">
    <location>
        <begin position="25"/>
        <end position="200"/>
    </location>
</feature>
<name>RMUC_ECOLI</name>
<gene>
    <name type="primary">rmuC</name>
    <name type="synonym">yigN</name>
    <name type="ordered locus">b3832</name>
    <name type="ordered locus">JW3809</name>
</gene>
<organism>
    <name type="scientific">Escherichia coli (strain K12)</name>
    <dbReference type="NCBI Taxonomy" id="83333"/>
    <lineage>
        <taxon>Bacteria</taxon>
        <taxon>Pseudomonadati</taxon>
        <taxon>Pseudomonadota</taxon>
        <taxon>Gammaproteobacteria</taxon>
        <taxon>Enterobacterales</taxon>
        <taxon>Enterobacteriaceae</taxon>
        <taxon>Escherichia</taxon>
    </lineage>
</organism>
<comment type="function">
    <text>Involved in DNA recombination.</text>
</comment>
<comment type="similarity">
    <text evidence="3">Belongs to the RmuC family.</text>
</comment>
<comment type="sequence caution" evidence="3">
    <conflict type="frameshift">
        <sequence resource="EMBL" id="X15689"/>
    </conflict>
</comment>
<sequence length="475" mass="54764">MDFSIMVYAVIALVGVAIGWLFASYQHAQQKAEQLAEREEMVAELSAAKQQITQSEHWRAECELLNNEVRSLQSINTSLEADLREVTTRMEAAQQHADDKIRQMINSEQRLSEQFENLANRIFEHSNRRVDEQNRQSLNSLLSPLREQLDGFRRQVQDSFGKEAQERHTLTHEIRNLQQLNAQMAQEAINLTRALKGDNKTQGNWGEVVLTRVLEASGLREGYEYETQVSIENDARSRMQPDVIVRLPQGKDVVIDAKMTLVAYERYFNAEDDYTRESALQEHIASVRNHIRLLGRKDYQQLPGLRTLDYVLMFIPVEPAFLLALDRQPELITEALKNNIMLVSPTTLLVALRTIANLWRYEHQSRNAQQIADRASKLYDKMRLFIDDMSAIGQSLDKAQDNYRQAMKKLSSGRGNVLAQAEAFRGLGVEIKREINPDLAEQAVSQDEEYRLRSVPEQPNDEAYQRDDEYNQQSR</sequence>
<proteinExistence type="inferred from homology"/>